<sequence length="215" mass="23124">MKALLLGAPGAGKGTQAQFITAAFGIPQISTGDMLRAAIKAGTPLGLEAKKIIDEGGLVRDDIIIGMVKERIAQDDCKNGFLFDGFPRTLAQAEAMVEAGVGLDAVVEIDVSDSVIVDRMSGRRVHLASGRTYHVTYNPPKTEGKDDVTGEDLIQRDDDKEETVKKRLAVYHEQTEVLVDFYSKLEGEHAPKYIKVDGTQAVEAVKAEVLGALGK</sequence>
<keyword id="KW-0067">ATP-binding</keyword>
<keyword id="KW-0963">Cytoplasm</keyword>
<keyword id="KW-0418">Kinase</keyword>
<keyword id="KW-0545">Nucleotide biosynthesis</keyword>
<keyword id="KW-0547">Nucleotide-binding</keyword>
<keyword id="KW-0808">Transferase</keyword>
<reference key="1">
    <citation type="journal article" date="2008" name="J. Bacteriol.">
        <title>Complete genome sequence of Neisseria gonorrhoeae NCCP11945.</title>
        <authorList>
            <person name="Chung G.T."/>
            <person name="Yoo J.S."/>
            <person name="Oh H.B."/>
            <person name="Lee Y.S."/>
            <person name="Cha S.H."/>
            <person name="Kim S.J."/>
            <person name="Yoo C.K."/>
        </authorList>
    </citation>
    <scope>NUCLEOTIDE SEQUENCE [LARGE SCALE GENOMIC DNA]</scope>
    <source>
        <strain>NCCP11945</strain>
    </source>
</reference>
<proteinExistence type="inferred from homology"/>
<accession>B4RKA2</accession>
<dbReference type="EC" id="2.7.4.3" evidence="1"/>
<dbReference type="EMBL" id="CP001050">
    <property type="protein sequence ID" value="ACF29253.1"/>
    <property type="molecule type" value="Genomic_DNA"/>
</dbReference>
<dbReference type="RefSeq" id="WP_003687832.1">
    <property type="nucleotide sequence ID" value="NC_011035.1"/>
</dbReference>
<dbReference type="SMR" id="B4RKA2"/>
<dbReference type="GeneID" id="66752738"/>
<dbReference type="KEGG" id="ngk:NGK_0562"/>
<dbReference type="HOGENOM" id="CLU_032354_1_2_4"/>
<dbReference type="UniPathway" id="UPA00588">
    <property type="reaction ID" value="UER00649"/>
</dbReference>
<dbReference type="Proteomes" id="UP000002564">
    <property type="component" value="Chromosome"/>
</dbReference>
<dbReference type="GO" id="GO:0005737">
    <property type="term" value="C:cytoplasm"/>
    <property type="evidence" value="ECO:0007669"/>
    <property type="project" value="UniProtKB-SubCell"/>
</dbReference>
<dbReference type="GO" id="GO:0004017">
    <property type="term" value="F:adenylate kinase activity"/>
    <property type="evidence" value="ECO:0007669"/>
    <property type="project" value="UniProtKB-UniRule"/>
</dbReference>
<dbReference type="GO" id="GO:0005524">
    <property type="term" value="F:ATP binding"/>
    <property type="evidence" value="ECO:0007669"/>
    <property type="project" value="UniProtKB-UniRule"/>
</dbReference>
<dbReference type="GO" id="GO:0044209">
    <property type="term" value="P:AMP salvage"/>
    <property type="evidence" value="ECO:0007669"/>
    <property type="project" value="UniProtKB-UniRule"/>
</dbReference>
<dbReference type="CDD" id="cd01428">
    <property type="entry name" value="ADK"/>
    <property type="match status" value="1"/>
</dbReference>
<dbReference type="FunFam" id="3.40.50.300:FF:000106">
    <property type="entry name" value="Adenylate kinase mitochondrial"/>
    <property type="match status" value="1"/>
</dbReference>
<dbReference type="Gene3D" id="3.40.50.300">
    <property type="entry name" value="P-loop containing nucleotide triphosphate hydrolases"/>
    <property type="match status" value="1"/>
</dbReference>
<dbReference type="HAMAP" id="MF_00235">
    <property type="entry name" value="Adenylate_kinase_Adk"/>
    <property type="match status" value="1"/>
</dbReference>
<dbReference type="InterPro" id="IPR006259">
    <property type="entry name" value="Adenyl_kin_sub"/>
</dbReference>
<dbReference type="InterPro" id="IPR000850">
    <property type="entry name" value="Adenylat/UMP-CMP_kin"/>
</dbReference>
<dbReference type="InterPro" id="IPR033690">
    <property type="entry name" value="Adenylat_kinase_CS"/>
</dbReference>
<dbReference type="InterPro" id="IPR007862">
    <property type="entry name" value="Adenylate_kinase_lid-dom"/>
</dbReference>
<dbReference type="InterPro" id="IPR027417">
    <property type="entry name" value="P-loop_NTPase"/>
</dbReference>
<dbReference type="NCBIfam" id="TIGR01351">
    <property type="entry name" value="adk"/>
    <property type="match status" value="1"/>
</dbReference>
<dbReference type="NCBIfam" id="NF001379">
    <property type="entry name" value="PRK00279.1-1"/>
    <property type="match status" value="1"/>
</dbReference>
<dbReference type="NCBIfam" id="NF001380">
    <property type="entry name" value="PRK00279.1-2"/>
    <property type="match status" value="1"/>
</dbReference>
<dbReference type="NCBIfam" id="NF001381">
    <property type="entry name" value="PRK00279.1-3"/>
    <property type="match status" value="1"/>
</dbReference>
<dbReference type="PANTHER" id="PTHR23359">
    <property type="entry name" value="NUCLEOTIDE KINASE"/>
    <property type="match status" value="1"/>
</dbReference>
<dbReference type="Pfam" id="PF00406">
    <property type="entry name" value="ADK"/>
    <property type="match status" value="1"/>
</dbReference>
<dbReference type="Pfam" id="PF05191">
    <property type="entry name" value="ADK_lid"/>
    <property type="match status" value="1"/>
</dbReference>
<dbReference type="PRINTS" id="PR00094">
    <property type="entry name" value="ADENYLTKNASE"/>
</dbReference>
<dbReference type="SUPFAM" id="SSF52540">
    <property type="entry name" value="P-loop containing nucleoside triphosphate hydrolases"/>
    <property type="match status" value="1"/>
</dbReference>
<dbReference type="PROSITE" id="PS00113">
    <property type="entry name" value="ADENYLATE_KINASE"/>
    <property type="match status" value="1"/>
</dbReference>
<name>KAD_NEIG2</name>
<organism>
    <name type="scientific">Neisseria gonorrhoeae (strain NCCP11945)</name>
    <dbReference type="NCBI Taxonomy" id="521006"/>
    <lineage>
        <taxon>Bacteria</taxon>
        <taxon>Pseudomonadati</taxon>
        <taxon>Pseudomonadota</taxon>
        <taxon>Betaproteobacteria</taxon>
        <taxon>Neisseriales</taxon>
        <taxon>Neisseriaceae</taxon>
        <taxon>Neisseria</taxon>
    </lineage>
</organism>
<comment type="function">
    <text evidence="1">Catalyzes the reversible transfer of the terminal phosphate group between ATP and AMP. Plays an important role in cellular energy homeostasis and in adenine nucleotide metabolism.</text>
</comment>
<comment type="catalytic activity">
    <reaction evidence="1">
        <text>AMP + ATP = 2 ADP</text>
        <dbReference type="Rhea" id="RHEA:12973"/>
        <dbReference type="ChEBI" id="CHEBI:30616"/>
        <dbReference type="ChEBI" id="CHEBI:456215"/>
        <dbReference type="ChEBI" id="CHEBI:456216"/>
        <dbReference type="EC" id="2.7.4.3"/>
    </reaction>
</comment>
<comment type="pathway">
    <text evidence="1">Purine metabolism; AMP biosynthesis via salvage pathway; AMP from ADP: step 1/1.</text>
</comment>
<comment type="subunit">
    <text evidence="1">Monomer.</text>
</comment>
<comment type="subcellular location">
    <subcellularLocation>
        <location evidence="1">Cytoplasm</location>
    </subcellularLocation>
</comment>
<comment type="domain">
    <text evidence="1">Consists of three domains, a large central CORE domain and two small peripheral domains, NMPbind and LID, which undergo movements during catalysis. The LID domain closes over the site of phosphoryl transfer upon ATP binding. Assembling and dissambling the active center during each catalytic cycle provides an effective means to prevent ATP hydrolysis.</text>
</comment>
<comment type="similarity">
    <text evidence="1">Belongs to the adenylate kinase family.</text>
</comment>
<protein>
    <recommendedName>
        <fullName evidence="1">Adenylate kinase</fullName>
        <shortName evidence="1">AK</shortName>
        <ecNumber evidence="1">2.7.4.3</ecNumber>
    </recommendedName>
    <alternativeName>
        <fullName evidence="1">ATP-AMP transphosphorylase</fullName>
    </alternativeName>
    <alternativeName>
        <fullName evidence="1">ATP:AMP phosphotransferase</fullName>
    </alternativeName>
    <alternativeName>
        <fullName evidence="1">Adenylate monophosphate kinase</fullName>
    </alternativeName>
</protein>
<gene>
    <name evidence="1" type="primary">adk</name>
    <name type="ordered locus">NGK_0562</name>
</gene>
<feature type="chain" id="PRO_1000100588" description="Adenylate kinase">
    <location>
        <begin position="1"/>
        <end position="215"/>
    </location>
</feature>
<feature type="region of interest" description="NMP" evidence="1">
    <location>
        <begin position="30"/>
        <end position="59"/>
    </location>
</feature>
<feature type="region of interest" description="LID" evidence="1">
    <location>
        <begin position="122"/>
        <end position="159"/>
    </location>
</feature>
<feature type="binding site" evidence="1">
    <location>
        <begin position="10"/>
        <end position="15"/>
    </location>
    <ligand>
        <name>ATP</name>
        <dbReference type="ChEBI" id="CHEBI:30616"/>
    </ligand>
</feature>
<feature type="binding site" evidence="1">
    <location>
        <position position="31"/>
    </location>
    <ligand>
        <name>AMP</name>
        <dbReference type="ChEBI" id="CHEBI:456215"/>
    </ligand>
</feature>
<feature type="binding site" evidence="1">
    <location>
        <position position="36"/>
    </location>
    <ligand>
        <name>AMP</name>
        <dbReference type="ChEBI" id="CHEBI:456215"/>
    </ligand>
</feature>
<feature type="binding site" evidence="1">
    <location>
        <begin position="57"/>
        <end position="59"/>
    </location>
    <ligand>
        <name>AMP</name>
        <dbReference type="ChEBI" id="CHEBI:456215"/>
    </ligand>
</feature>
<feature type="binding site" evidence="1">
    <location>
        <begin position="85"/>
        <end position="88"/>
    </location>
    <ligand>
        <name>AMP</name>
        <dbReference type="ChEBI" id="CHEBI:456215"/>
    </ligand>
</feature>
<feature type="binding site" evidence="1">
    <location>
        <position position="92"/>
    </location>
    <ligand>
        <name>AMP</name>
        <dbReference type="ChEBI" id="CHEBI:456215"/>
    </ligand>
</feature>
<feature type="binding site" evidence="1">
    <location>
        <position position="123"/>
    </location>
    <ligand>
        <name>ATP</name>
        <dbReference type="ChEBI" id="CHEBI:30616"/>
    </ligand>
</feature>
<feature type="binding site" evidence="1">
    <location>
        <begin position="132"/>
        <end position="133"/>
    </location>
    <ligand>
        <name>ATP</name>
        <dbReference type="ChEBI" id="CHEBI:30616"/>
    </ligand>
</feature>
<feature type="binding site" evidence="1">
    <location>
        <position position="156"/>
    </location>
    <ligand>
        <name>AMP</name>
        <dbReference type="ChEBI" id="CHEBI:456215"/>
    </ligand>
</feature>
<feature type="binding site" evidence="1">
    <location>
        <position position="167"/>
    </location>
    <ligand>
        <name>AMP</name>
        <dbReference type="ChEBI" id="CHEBI:456215"/>
    </ligand>
</feature>
<feature type="binding site" evidence="1">
    <location>
        <position position="200"/>
    </location>
    <ligand>
        <name>ATP</name>
        <dbReference type="ChEBI" id="CHEBI:30616"/>
    </ligand>
</feature>
<evidence type="ECO:0000255" key="1">
    <source>
        <dbReference type="HAMAP-Rule" id="MF_00235"/>
    </source>
</evidence>